<name>CU6B_LIMPO</name>
<protein>
    <recommendedName>
        <fullName>Cuticle protein 6 isoform b</fullName>
    </recommendedName>
    <alternativeName>
        <fullName>LpCP6b</fullName>
    </alternativeName>
</protein>
<comment type="mass spectrometry" mass="5889.5" method="Electrospray" evidence="1"/>
<dbReference type="Proteomes" id="UP000694941">
    <property type="component" value="Unplaced"/>
</dbReference>
<dbReference type="GO" id="GO:0042302">
    <property type="term" value="F:structural constituent of cuticle"/>
    <property type="evidence" value="ECO:0007669"/>
    <property type="project" value="UniProtKB-KW"/>
</dbReference>
<keyword id="KW-0193">Cuticle</keyword>
<keyword id="KW-0903">Direct protein sequencing</keyword>
<proteinExistence type="evidence at protein level"/>
<accession>P83358</accession>
<reference key="1">
    <citation type="journal article" date="2003" name="Comp. Biochem. Physiol.">
        <title>Cuticular proteins from the horseshoe crab, Limulus polyphemus.</title>
        <authorList>
            <person name="Ditzel N."/>
            <person name="Andersen S.O."/>
            <person name="Hoejrup P."/>
        </authorList>
    </citation>
    <scope>PROTEIN SEQUENCE</scope>
    <scope>MASS SPECTROMETRY</scope>
    <source>
        <tissue>Carapace cuticle</tissue>
    </source>
</reference>
<sequence length="48" mass="5891">GYYYPYHGGHYYGAHYGGYPYGHFYNYRHTPYYSGLRYYGSYGYPHHF</sequence>
<feature type="chain" id="PRO_0000196172" description="Cuticle protein 6 isoform b">
    <location>
        <begin position="1"/>
        <end position="48"/>
    </location>
</feature>
<organism evidence="2">
    <name type="scientific">Limulus polyphemus</name>
    <name type="common">Atlantic horseshoe crab</name>
    <dbReference type="NCBI Taxonomy" id="6850"/>
    <lineage>
        <taxon>Eukaryota</taxon>
        <taxon>Metazoa</taxon>
        <taxon>Ecdysozoa</taxon>
        <taxon>Arthropoda</taxon>
        <taxon>Chelicerata</taxon>
        <taxon>Merostomata</taxon>
        <taxon>Xiphosura</taxon>
        <taxon>Limulidae</taxon>
        <taxon>Limulus</taxon>
    </lineage>
</organism>
<evidence type="ECO:0000269" key="1">
    <source>
    </source>
</evidence>
<evidence type="ECO:0000305" key="2"/>